<dbReference type="EC" id="4.3.1.7" evidence="1"/>
<dbReference type="EMBL" id="AM933172">
    <property type="protein sequence ID" value="CAR34022.1"/>
    <property type="molecule type" value="Genomic_DNA"/>
</dbReference>
<dbReference type="RefSeq" id="WP_000372354.1">
    <property type="nucleotide sequence ID" value="NC_011294.1"/>
</dbReference>
<dbReference type="SMR" id="B5R4G5"/>
<dbReference type="KEGG" id="set:SEN2437"/>
<dbReference type="HOGENOM" id="CLU_068224_2_0_6"/>
<dbReference type="UniPathway" id="UPA00560"/>
<dbReference type="Proteomes" id="UP000000613">
    <property type="component" value="Chromosome"/>
</dbReference>
<dbReference type="GO" id="GO:0009350">
    <property type="term" value="C:ethanolamine ammonia-lyase complex"/>
    <property type="evidence" value="ECO:0007669"/>
    <property type="project" value="UniProtKB-UniRule"/>
</dbReference>
<dbReference type="GO" id="GO:0031471">
    <property type="term" value="C:ethanolamine degradation polyhedral organelle"/>
    <property type="evidence" value="ECO:0007669"/>
    <property type="project" value="UniProtKB-UniRule"/>
</dbReference>
<dbReference type="GO" id="GO:0031419">
    <property type="term" value="F:cobalamin binding"/>
    <property type="evidence" value="ECO:0007669"/>
    <property type="project" value="UniProtKB-UniRule"/>
</dbReference>
<dbReference type="GO" id="GO:0008851">
    <property type="term" value="F:ethanolamine ammonia-lyase activity"/>
    <property type="evidence" value="ECO:0007669"/>
    <property type="project" value="UniProtKB-UniRule"/>
</dbReference>
<dbReference type="GO" id="GO:0006520">
    <property type="term" value="P:amino acid metabolic process"/>
    <property type="evidence" value="ECO:0007669"/>
    <property type="project" value="InterPro"/>
</dbReference>
<dbReference type="GO" id="GO:0046336">
    <property type="term" value="P:ethanolamine catabolic process"/>
    <property type="evidence" value="ECO:0007669"/>
    <property type="project" value="UniProtKB-UniRule"/>
</dbReference>
<dbReference type="FunFam" id="3.40.50.11240:FF:000001">
    <property type="entry name" value="Ethanolamine ammonia-lyase light chain"/>
    <property type="match status" value="1"/>
</dbReference>
<dbReference type="Gene3D" id="6.10.140.690">
    <property type="match status" value="1"/>
</dbReference>
<dbReference type="Gene3D" id="6.10.250.2060">
    <property type="match status" value="1"/>
</dbReference>
<dbReference type="Gene3D" id="3.40.50.11240">
    <property type="entry name" value="Ethanolamine ammonia-lyase light chain (EutC)"/>
    <property type="match status" value="1"/>
</dbReference>
<dbReference type="HAMAP" id="MF_00601">
    <property type="entry name" value="EutC"/>
    <property type="match status" value="1"/>
</dbReference>
<dbReference type="InterPro" id="IPR009246">
    <property type="entry name" value="EutC"/>
</dbReference>
<dbReference type="InterPro" id="IPR042251">
    <property type="entry name" value="EutC_C"/>
</dbReference>
<dbReference type="NCBIfam" id="NF003971">
    <property type="entry name" value="PRK05465.1"/>
    <property type="match status" value="1"/>
</dbReference>
<dbReference type="PANTHER" id="PTHR39330">
    <property type="entry name" value="ETHANOLAMINE AMMONIA-LYASE LIGHT CHAIN"/>
    <property type="match status" value="1"/>
</dbReference>
<dbReference type="PANTHER" id="PTHR39330:SF1">
    <property type="entry name" value="ETHANOLAMINE AMMONIA-LYASE SMALL SUBUNIT"/>
    <property type="match status" value="1"/>
</dbReference>
<dbReference type="Pfam" id="PF05985">
    <property type="entry name" value="EutC"/>
    <property type="match status" value="1"/>
</dbReference>
<dbReference type="PIRSF" id="PIRSF018982">
    <property type="entry name" value="EutC"/>
    <property type="match status" value="1"/>
</dbReference>
<reference key="1">
    <citation type="journal article" date="2008" name="Genome Res.">
        <title>Comparative genome analysis of Salmonella enteritidis PT4 and Salmonella gallinarum 287/91 provides insights into evolutionary and host adaptation pathways.</title>
        <authorList>
            <person name="Thomson N.R."/>
            <person name="Clayton D.J."/>
            <person name="Windhorst D."/>
            <person name="Vernikos G."/>
            <person name="Davidson S."/>
            <person name="Churcher C."/>
            <person name="Quail M.A."/>
            <person name="Stevens M."/>
            <person name="Jones M.A."/>
            <person name="Watson M."/>
            <person name="Barron A."/>
            <person name="Layton A."/>
            <person name="Pickard D."/>
            <person name="Kingsley R.A."/>
            <person name="Bignell A."/>
            <person name="Clark L."/>
            <person name="Harris B."/>
            <person name="Ormond D."/>
            <person name="Abdellah Z."/>
            <person name="Brooks K."/>
            <person name="Cherevach I."/>
            <person name="Chillingworth T."/>
            <person name="Woodward J."/>
            <person name="Norberczak H."/>
            <person name="Lord A."/>
            <person name="Arrowsmith C."/>
            <person name="Jagels K."/>
            <person name="Moule S."/>
            <person name="Mungall K."/>
            <person name="Saunders M."/>
            <person name="Whitehead S."/>
            <person name="Chabalgoity J.A."/>
            <person name="Maskell D."/>
            <person name="Humphreys T."/>
            <person name="Roberts M."/>
            <person name="Barrow P.A."/>
            <person name="Dougan G."/>
            <person name="Parkhill J."/>
        </authorList>
    </citation>
    <scope>NUCLEOTIDE SEQUENCE [LARGE SCALE GENOMIC DNA]</scope>
    <source>
        <strain>P125109</strain>
    </source>
</reference>
<protein>
    <recommendedName>
        <fullName evidence="1">Ethanolamine ammonia-lyase small subunit</fullName>
        <shortName evidence="1">EAL small subunit</shortName>
        <ecNumber evidence="1">4.3.1.7</ecNumber>
    </recommendedName>
</protein>
<comment type="function">
    <text evidence="1">Catalyzes the deamination of various vicinal amino-alcohols to oxo compounds. Allows this organism to utilize ethanolamine as the sole source of nitrogen and carbon in the presence of external vitamin B12.</text>
</comment>
<comment type="catalytic activity">
    <reaction evidence="1">
        <text>ethanolamine = acetaldehyde + NH4(+)</text>
        <dbReference type="Rhea" id="RHEA:15313"/>
        <dbReference type="ChEBI" id="CHEBI:15343"/>
        <dbReference type="ChEBI" id="CHEBI:28938"/>
        <dbReference type="ChEBI" id="CHEBI:57603"/>
        <dbReference type="EC" id="4.3.1.7"/>
    </reaction>
</comment>
<comment type="cofactor">
    <cofactor evidence="1">
        <name>adenosylcob(III)alamin</name>
        <dbReference type="ChEBI" id="CHEBI:18408"/>
    </cofactor>
    <text evidence="1">Binds between the large and small subunits.</text>
</comment>
<comment type="pathway">
    <text evidence="1">Amine and polyamine degradation; ethanolamine degradation.</text>
</comment>
<comment type="subunit">
    <text evidence="1">The basic unit is a heterodimer which dimerizes to form tetramers. The heterotetramers trimerize; 6 large subunits form a core ring with 6 small subunits projecting outwards.</text>
</comment>
<comment type="subcellular location">
    <subcellularLocation>
        <location evidence="1">Bacterial microcompartment</location>
    </subcellularLocation>
</comment>
<comment type="similarity">
    <text evidence="1">Belongs to the EutC family.</text>
</comment>
<organism>
    <name type="scientific">Salmonella enteritidis PT4 (strain P125109)</name>
    <dbReference type="NCBI Taxonomy" id="550537"/>
    <lineage>
        <taxon>Bacteria</taxon>
        <taxon>Pseudomonadati</taxon>
        <taxon>Pseudomonadota</taxon>
        <taxon>Gammaproteobacteria</taxon>
        <taxon>Enterobacterales</taxon>
        <taxon>Enterobacteriaceae</taxon>
        <taxon>Salmonella</taxon>
    </lineage>
</organism>
<accession>B5R4G5</accession>
<feature type="chain" id="PRO_1000130099" description="Ethanolamine ammonia-lyase small subunit">
    <location>
        <begin position="1"/>
        <end position="298"/>
    </location>
</feature>
<feature type="binding site" evidence="1">
    <location>
        <position position="210"/>
    </location>
    <ligand>
        <name>adenosylcob(III)alamin</name>
        <dbReference type="ChEBI" id="CHEBI:18408"/>
    </ligand>
</feature>
<feature type="binding site" evidence="1">
    <location>
        <position position="231"/>
    </location>
    <ligand>
        <name>adenosylcob(III)alamin</name>
        <dbReference type="ChEBI" id="CHEBI:18408"/>
    </ligand>
</feature>
<feature type="binding site" evidence="1">
    <location>
        <position position="261"/>
    </location>
    <ligand>
        <name>adenosylcob(III)alamin</name>
        <dbReference type="ChEBI" id="CHEBI:18408"/>
    </ligand>
</feature>
<name>EUTC_SALEP</name>
<gene>
    <name evidence="1" type="primary">eutC</name>
    <name type="ordered locus">SEN2437</name>
</gene>
<evidence type="ECO:0000255" key="1">
    <source>
        <dbReference type="HAMAP-Rule" id="MF_00601"/>
    </source>
</evidence>
<sequence>MDQKQIEEIVRSVMASMGQDVPQPVAPSTQEGAKPQCAAPTVTESCALDLGSAEAKAWIGVENPHRADVLTELRRSTAARVCTGRAGPRPRTQALLRFLADHSRSKDTVLKEVPEEWVKAQGLLEVRSEISDKNLYLTRPDMGRRLSPEAIDALKSQCVMNPDVQVVVSDGLSTDAITANYEEILPPLLAGLKQAGLNVGTPFFVRYGRVKIEDQIGEILGAKVVILLVGERPGLGQSESLSCYAVYSPRVATTVEADRTCISNIHQGGTPPVEAAAVIVDLAKRMLEQKASGINMTR</sequence>
<proteinExistence type="inferred from homology"/>
<keyword id="KW-1283">Bacterial microcompartment</keyword>
<keyword id="KW-0846">Cobalamin</keyword>
<keyword id="KW-0170">Cobalt</keyword>
<keyword id="KW-0456">Lyase</keyword>